<reference key="1">
    <citation type="submission" date="1999-09" db="EMBL/GenBank/DDBJ databases">
        <title>Organization of the solvent-production genes in Clostridium beijerinckii NRRL B593.</title>
        <authorList>
            <person name="Toth J."/>
            <person name="Chen J.S."/>
        </authorList>
    </citation>
    <scope>NUCLEOTIDE SEQUENCE [GENOMIC DNA]</scope>
    <source>
        <strain>NRRL B-593</strain>
    </source>
</reference>
<reference key="2">
    <citation type="submission" date="2004-05" db="EMBL/GenBank/DDBJ databases">
        <title>Acetoacetate:butyrate/acetate coenzyme A transferase and its structural genes from Clostridium beijerinckii NRRL B593.</title>
        <authorList>
            <person name="Toth J."/>
            <person name="Colby G.D."/>
            <person name="Chen J.S."/>
        </authorList>
    </citation>
    <scope>NUCLEOTIDE SEQUENCE [GENOMIC DNA]</scope>
    <source>
        <strain>NRRL B-593</strain>
    </source>
</reference>
<organism>
    <name type="scientific">Clostridium beijerinckii</name>
    <name type="common">Clostridium MP</name>
    <dbReference type="NCBI Taxonomy" id="1520"/>
    <lineage>
        <taxon>Bacteria</taxon>
        <taxon>Bacillati</taxon>
        <taxon>Bacillota</taxon>
        <taxon>Clostridia</taxon>
        <taxon>Eubacteriales</taxon>
        <taxon>Clostridiaceae</taxon>
        <taxon>Clostridium</taxon>
    </lineage>
</organism>
<comment type="function">
    <text evidence="1">Catalyzes the conversion of acetoacetate to acetone and carbon dioxide.</text>
</comment>
<comment type="catalytic activity">
    <reaction evidence="1">
        <text>acetoacetate + H(+) = acetone + CO2</text>
        <dbReference type="Rhea" id="RHEA:19729"/>
        <dbReference type="ChEBI" id="CHEBI:13705"/>
        <dbReference type="ChEBI" id="CHEBI:15347"/>
        <dbReference type="ChEBI" id="CHEBI:15378"/>
        <dbReference type="ChEBI" id="CHEBI:16526"/>
        <dbReference type="EC" id="4.1.1.4"/>
    </reaction>
</comment>
<comment type="similarity">
    <text evidence="1">Belongs to the ADC family.</text>
</comment>
<keyword id="KW-0210">Decarboxylase</keyword>
<keyword id="KW-0456">Lyase</keyword>
<keyword id="KW-0704">Schiff base</keyword>
<sequence>MLESEVSKQITTPLAAPAFPRGPYRFHNREYLNIIYRTDLDALRKIVPEPLELDGAYVRFEMMAMPDTTGLGSYTECGQAIPVKYNEVKGDYLHMMYLDNEPAIAVGRESSAYPKKFGYPKLFVDSDALVGALKYGALPVVTATMGYKHEPLDLKEAYTQIARPNFMLKIIQGYDGKPRICELICAENTDITIHGAWTGSARLQLFSHALAPLADLPVLEIVSASHILTDLTLGTPKVVHDYLSVK</sequence>
<gene>
    <name evidence="1" type="primary">adc</name>
</gene>
<accession>Q9RPK1</accession>
<accession>Q9RPJ8</accession>
<name>ADC_CLOBE</name>
<feature type="chain" id="PRO_0000207102" description="Acetoacetate decarboxylase">
    <location>
        <begin position="1"/>
        <end position="246"/>
    </location>
</feature>
<feature type="active site" description="Schiff-base intermediate with acetoacetate" evidence="1">
    <location>
        <position position="115"/>
    </location>
</feature>
<dbReference type="EC" id="4.1.1.4" evidence="1"/>
<dbReference type="EMBL" id="AF157305">
    <property type="protein sequence ID" value="AAD54946.1"/>
    <property type="molecule type" value="Genomic_DNA"/>
</dbReference>
<dbReference type="EMBL" id="AF157306">
    <property type="protein sequence ID" value="AAD54949.2"/>
    <property type="molecule type" value="Genomic_DNA"/>
</dbReference>
<dbReference type="SMR" id="Q9RPK1"/>
<dbReference type="STRING" id="1520.LF65_04320"/>
<dbReference type="GO" id="GO:0047602">
    <property type="term" value="F:acetoacetate decarboxylase activity"/>
    <property type="evidence" value="ECO:0007669"/>
    <property type="project" value="UniProtKB-UniRule"/>
</dbReference>
<dbReference type="Gene3D" id="2.40.400.10">
    <property type="entry name" value="Acetoacetate decarboxylase-like"/>
    <property type="match status" value="1"/>
</dbReference>
<dbReference type="HAMAP" id="MF_00597">
    <property type="entry name" value="ADC"/>
    <property type="match status" value="1"/>
</dbReference>
<dbReference type="InterPro" id="IPR010451">
    <property type="entry name" value="Acetoacetate_decarboxylase"/>
</dbReference>
<dbReference type="InterPro" id="IPR023653">
    <property type="entry name" value="Acetoacetate_decarboxylase_bac"/>
</dbReference>
<dbReference type="InterPro" id="IPR023375">
    <property type="entry name" value="ADC_dom_sf"/>
</dbReference>
<dbReference type="NCBIfam" id="NF002614">
    <property type="entry name" value="PRK02265.1"/>
    <property type="match status" value="1"/>
</dbReference>
<dbReference type="Pfam" id="PF06314">
    <property type="entry name" value="ADC"/>
    <property type="match status" value="1"/>
</dbReference>
<dbReference type="SUPFAM" id="SSF160104">
    <property type="entry name" value="Acetoacetate decarboxylase-like"/>
    <property type="match status" value="1"/>
</dbReference>
<protein>
    <recommendedName>
        <fullName evidence="1">Acetoacetate decarboxylase</fullName>
        <shortName evidence="1">AAD</shortName>
        <shortName evidence="1">ADC</shortName>
        <ecNumber evidence="1">4.1.1.4</ecNumber>
    </recommendedName>
</protein>
<evidence type="ECO:0000255" key="1">
    <source>
        <dbReference type="HAMAP-Rule" id="MF_00597"/>
    </source>
</evidence>
<proteinExistence type="inferred from homology"/>